<reference key="1">
    <citation type="submission" date="1994-07" db="EMBL/GenBank/DDBJ databases">
        <authorList>
            <person name="Burns S.A."/>
            <person name="Neufeld E.J."/>
            <person name="Donady J.J."/>
        </authorList>
    </citation>
    <scope>NUCLEOTIDE SEQUENCE [MRNA]</scope>
    <source>
        <tissue>Heart</tissue>
    </source>
</reference>
<accession>P98109</accession>
<gene>
    <name type="primary">SELP</name>
</gene>
<keyword id="KW-0106">Calcium</keyword>
<keyword id="KW-0130">Cell adhesion</keyword>
<keyword id="KW-1003">Cell membrane</keyword>
<keyword id="KW-1015">Disulfide bond</keyword>
<keyword id="KW-0245">EGF-like domain</keyword>
<keyword id="KW-0325">Glycoprotein</keyword>
<keyword id="KW-0430">Lectin</keyword>
<keyword id="KW-0472">Membrane</keyword>
<keyword id="KW-0479">Metal-binding</keyword>
<keyword id="KW-1185">Reference proteome</keyword>
<keyword id="KW-0677">Repeat</keyword>
<keyword id="KW-0732">Signal</keyword>
<keyword id="KW-0768">Sushi</keyword>
<keyword id="KW-0812">Transmembrane</keyword>
<keyword id="KW-1133">Transmembrane helix</keyword>
<evidence type="ECO:0000250" key="1"/>
<evidence type="ECO:0000250" key="2">
    <source>
        <dbReference type="UniProtKB" id="P16109"/>
    </source>
</evidence>
<evidence type="ECO:0000255" key="3"/>
<evidence type="ECO:0000255" key="4">
    <source>
        <dbReference type="PROSITE-ProRule" id="PRU00040"/>
    </source>
</evidence>
<evidence type="ECO:0000255" key="5">
    <source>
        <dbReference type="PROSITE-ProRule" id="PRU00076"/>
    </source>
</evidence>
<evidence type="ECO:0000255" key="6">
    <source>
        <dbReference type="PROSITE-ProRule" id="PRU00302"/>
    </source>
</evidence>
<evidence type="ECO:0000256" key="7">
    <source>
        <dbReference type="SAM" id="MobiDB-lite"/>
    </source>
</evidence>
<evidence type="ECO:0000305" key="8"/>
<protein>
    <recommendedName>
        <fullName>P-selectin</fullName>
    </recommendedName>
    <alternativeName>
        <fullName>CD62 antigen-like family member P</fullName>
    </alternativeName>
    <alternativeName>
        <fullName>CD62P antigen</fullName>
    </alternativeName>
    <alternativeName>
        <fullName>Granule membrane protein 140</fullName>
        <shortName>GMP-140</shortName>
    </alternativeName>
    <alternativeName>
        <fullName>Leukocyte-endothelial cell adhesion molecule 3</fullName>
        <shortName>LECAM3</shortName>
    </alternativeName>
    <alternativeName>
        <fullName>Platelet activation dependent granule-external membrane protein</fullName>
        <shortName>PADGEM</shortName>
    </alternativeName>
    <cdAntigenName>CD62</cdAntigenName>
</protein>
<organism>
    <name type="scientific">Ovis aries</name>
    <name type="common">Sheep</name>
    <dbReference type="NCBI Taxonomy" id="9940"/>
    <lineage>
        <taxon>Eukaryota</taxon>
        <taxon>Metazoa</taxon>
        <taxon>Chordata</taxon>
        <taxon>Craniata</taxon>
        <taxon>Vertebrata</taxon>
        <taxon>Euteleostomi</taxon>
        <taxon>Mammalia</taxon>
        <taxon>Eutheria</taxon>
        <taxon>Laurasiatheria</taxon>
        <taxon>Artiodactyla</taxon>
        <taxon>Ruminantia</taxon>
        <taxon>Pecora</taxon>
        <taxon>Bovidae</taxon>
        <taxon>Caprinae</taxon>
        <taxon>Ovis</taxon>
    </lineage>
</organism>
<dbReference type="EMBL" id="L34270">
    <property type="protein sequence ID" value="AAB59261.1"/>
    <property type="molecule type" value="mRNA"/>
</dbReference>
<dbReference type="RefSeq" id="NP_001009295.1">
    <property type="nucleotide sequence ID" value="NM_001009295.1"/>
</dbReference>
<dbReference type="SMR" id="P98109"/>
<dbReference type="STRING" id="9940.ENSOARP00000011508"/>
<dbReference type="GlyCosmos" id="P98109">
    <property type="glycosylation" value="11 sites, No reported glycans"/>
</dbReference>
<dbReference type="PaxDb" id="9940-ENSOARP00000011508"/>
<dbReference type="Ensembl" id="ENSOART00180029721">
    <property type="protein sequence ID" value="ENSOARP00180015244"/>
    <property type="gene ID" value="ENSOARG00180018081"/>
</dbReference>
<dbReference type="Ensembl" id="ENSOART00215027819">
    <property type="protein sequence ID" value="ENSOARP00215014669"/>
    <property type="gene ID" value="ENSOARG00215016446"/>
</dbReference>
<dbReference type="Ensembl" id="ENSOART00225073868">
    <property type="protein sequence ID" value="ENSOARP00225037498"/>
    <property type="gene ID" value="ENSOARG00225044642"/>
</dbReference>
<dbReference type="GeneID" id="443305"/>
<dbReference type="KEGG" id="oas:443305"/>
<dbReference type="CTD" id="6403"/>
<dbReference type="eggNOG" id="KOG4297">
    <property type="taxonomic scope" value="Eukaryota"/>
</dbReference>
<dbReference type="OrthoDB" id="406096at2759"/>
<dbReference type="Proteomes" id="UP000002356">
    <property type="component" value="Unplaced"/>
</dbReference>
<dbReference type="GO" id="GO:0009897">
    <property type="term" value="C:external side of plasma membrane"/>
    <property type="evidence" value="ECO:0007669"/>
    <property type="project" value="Ensembl"/>
</dbReference>
<dbReference type="GO" id="GO:0005615">
    <property type="term" value="C:extracellular space"/>
    <property type="evidence" value="ECO:0007669"/>
    <property type="project" value="Ensembl"/>
</dbReference>
<dbReference type="GO" id="GO:0005886">
    <property type="term" value="C:plasma membrane"/>
    <property type="evidence" value="ECO:0000250"/>
    <property type="project" value="UniProtKB"/>
</dbReference>
<dbReference type="GO" id="GO:0031092">
    <property type="term" value="C:platelet alpha granule membrane"/>
    <property type="evidence" value="ECO:0007669"/>
    <property type="project" value="Ensembl"/>
</dbReference>
<dbReference type="GO" id="GO:0005509">
    <property type="term" value="F:calcium ion binding"/>
    <property type="evidence" value="ECO:0000250"/>
    <property type="project" value="UniProtKB"/>
</dbReference>
<dbReference type="GO" id="GO:0048306">
    <property type="term" value="F:calcium-dependent protein binding"/>
    <property type="evidence" value="ECO:0007669"/>
    <property type="project" value="Ensembl"/>
</dbReference>
<dbReference type="GO" id="GO:0042806">
    <property type="term" value="F:fucose binding"/>
    <property type="evidence" value="ECO:0007669"/>
    <property type="project" value="Ensembl"/>
</dbReference>
<dbReference type="GO" id="GO:0008201">
    <property type="term" value="F:heparin binding"/>
    <property type="evidence" value="ECO:0007669"/>
    <property type="project" value="Ensembl"/>
</dbReference>
<dbReference type="GO" id="GO:0005178">
    <property type="term" value="F:integrin binding"/>
    <property type="evidence" value="ECO:0000250"/>
    <property type="project" value="UniProtKB"/>
</dbReference>
<dbReference type="GO" id="GO:0001530">
    <property type="term" value="F:lipopolysaccharide binding"/>
    <property type="evidence" value="ECO:0007669"/>
    <property type="project" value="Ensembl"/>
</dbReference>
<dbReference type="GO" id="GO:0070492">
    <property type="term" value="F:oligosaccharide binding"/>
    <property type="evidence" value="ECO:0000250"/>
    <property type="project" value="UniProtKB"/>
</dbReference>
<dbReference type="GO" id="GO:0033691">
    <property type="term" value="F:sialic acid binding"/>
    <property type="evidence" value="ECO:0007669"/>
    <property type="project" value="Ensembl"/>
</dbReference>
<dbReference type="GO" id="GO:0016339">
    <property type="term" value="P:calcium-dependent cell-cell adhesion via plasma membrane cell adhesion molecules"/>
    <property type="evidence" value="ECO:0000250"/>
    <property type="project" value="UniProtKB"/>
</dbReference>
<dbReference type="GO" id="GO:0098609">
    <property type="term" value="P:cell-cell adhesion"/>
    <property type="evidence" value="ECO:0000250"/>
    <property type="project" value="UniProtKB"/>
</dbReference>
<dbReference type="GO" id="GO:0007157">
    <property type="term" value="P:heterophilic cell-cell adhesion via plasma membrane cell adhesion molecules"/>
    <property type="evidence" value="ECO:0007669"/>
    <property type="project" value="Ensembl"/>
</dbReference>
<dbReference type="GO" id="GO:0006954">
    <property type="term" value="P:inflammatory response"/>
    <property type="evidence" value="ECO:0007669"/>
    <property type="project" value="Ensembl"/>
</dbReference>
<dbReference type="GO" id="GO:0050901">
    <property type="term" value="P:leukocyte tethering or rolling"/>
    <property type="evidence" value="ECO:0000250"/>
    <property type="project" value="UniProtKB"/>
</dbReference>
<dbReference type="GO" id="GO:0002687">
    <property type="term" value="P:positive regulation of leukocyte migration"/>
    <property type="evidence" value="ECO:0007669"/>
    <property type="project" value="Ensembl"/>
</dbReference>
<dbReference type="GO" id="GO:1903238">
    <property type="term" value="P:positive regulation of leukocyte tethering or rolling"/>
    <property type="evidence" value="ECO:0000250"/>
    <property type="project" value="UniProtKB"/>
</dbReference>
<dbReference type="GO" id="GO:0051897">
    <property type="term" value="P:positive regulation of phosphatidylinositol 3-kinase/protein kinase B signal transduction"/>
    <property type="evidence" value="ECO:0007669"/>
    <property type="project" value="Ensembl"/>
</dbReference>
<dbReference type="GO" id="GO:0010572">
    <property type="term" value="P:positive regulation of platelet activation"/>
    <property type="evidence" value="ECO:0007669"/>
    <property type="project" value="Ensembl"/>
</dbReference>
<dbReference type="GO" id="GO:0033623">
    <property type="term" value="P:regulation of integrin activation"/>
    <property type="evidence" value="ECO:0007669"/>
    <property type="project" value="Ensembl"/>
</dbReference>
<dbReference type="CDD" id="cd00033">
    <property type="entry name" value="CCP"/>
    <property type="match status" value="8"/>
</dbReference>
<dbReference type="CDD" id="cd03592">
    <property type="entry name" value="CLECT_selectins_like"/>
    <property type="match status" value="1"/>
</dbReference>
<dbReference type="CDD" id="cd00054">
    <property type="entry name" value="EGF_CA"/>
    <property type="match status" value="1"/>
</dbReference>
<dbReference type="FunFam" id="3.10.100.10:FF:000007">
    <property type="entry name" value="L-selectin"/>
    <property type="match status" value="1"/>
</dbReference>
<dbReference type="FunFam" id="2.10.25.10:FF:000176">
    <property type="entry name" value="Selectin P"/>
    <property type="match status" value="1"/>
</dbReference>
<dbReference type="FunFam" id="2.10.70.10:FF:000001">
    <property type="entry name" value="Selectin P"/>
    <property type="match status" value="8"/>
</dbReference>
<dbReference type="Gene3D" id="2.10.70.10">
    <property type="entry name" value="Complement Module, domain 1"/>
    <property type="match status" value="8"/>
</dbReference>
<dbReference type="Gene3D" id="2.10.25.10">
    <property type="entry name" value="Laminin"/>
    <property type="match status" value="1"/>
</dbReference>
<dbReference type="Gene3D" id="3.10.100.10">
    <property type="entry name" value="Mannose-Binding Protein A, subunit A"/>
    <property type="match status" value="1"/>
</dbReference>
<dbReference type="InterPro" id="IPR001304">
    <property type="entry name" value="C-type_lectin-like"/>
</dbReference>
<dbReference type="InterPro" id="IPR016186">
    <property type="entry name" value="C-type_lectin-like/link_sf"/>
</dbReference>
<dbReference type="InterPro" id="IPR018378">
    <property type="entry name" value="C-type_lectin_CS"/>
</dbReference>
<dbReference type="InterPro" id="IPR050350">
    <property type="entry name" value="Compl-Cell_Adhes-Reg"/>
</dbReference>
<dbReference type="InterPro" id="IPR016187">
    <property type="entry name" value="CTDL_fold"/>
</dbReference>
<dbReference type="InterPro" id="IPR000742">
    <property type="entry name" value="EGF-like_dom"/>
</dbReference>
<dbReference type="InterPro" id="IPR033991">
    <property type="entry name" value="Selectin_CTLD"/>
</dbReference>
<dbReference type="InterPro" id="IPR002396">
    <property type="entry name" value="Selectin_superfamily"/>
</dbReference>
<dbReference type="InterPro" id="IPR035976">
    <property type="entry name" value="Sushi/SCR/CCP_sf"/>
</dbReference>
<dbReference type="InterPro" id="IPR000436">
    <property type="entry name" value="Sushi_SCR_CCP_dom"/>
</dbReference>
<dbReference type="PANTHER" id="PTHR19325">
    <property type="entry name" value="COMPLEMENT COMPONENT-RELATED SUSHI DOMAIN-CONTAINING"/>
    <property type="match status" value="1"/>
</dbReference>
<dbReference type="PANTHER" id="PTHR19325:SF493">
    <property type="entry name" value="E-SELECTIN"/>
    <property type="match status" value="1"/>
</dbReference>
<dbReference type="Pfam" id="PF00008">
    <property type="entry name" value="EGF"/>
    <property type="match status" value="1"/>
</dbReference>
<dbReference type="Pfam" id="PF00059">
    <property type="entry name" value="Lectin_C"/>
    <property type="match status" value="1"/>
</dbReference>
<dbReference type="Pfam" id="PF00084">
    <property type="entry name" value="Sushi"/>
    <property type="match status" value="8"/>
</dbReference>
<dbReference type="PRINTS" id="PR00343">
    <property type="entry name" value="SELECTIN"/>
</dbReference>
<dbReference type="SMART" id="SM00032">
    <property type="entry name" value="CCP"/>
    <property type="match status" value="8"/>
</dbReference>
<dbReference type="SMART" id="SM00034">
    <property type="entry name" value="CLECT"/>
    <property type="match status" value="1"/>
</dbReference>
<dbReference type="SMART" id="SM00181">
    <property type="entry name" value="EGF"/>
    <property type="match status" value="2"/>
</dbReference>
<dbReference type="SUPFAM" id="SSF56436">
    <property type="entry name" value="C-type lectin-like"/>
    <property type="match status" value="1"/>
</dbReference>
<dbReference type="SUPFAM" id="SSF57535">
    <property type="entry name" value="Complement control module/SCR domain"/>
    <property type="match status" value="8"/>
</dbReference>
<dbReference type="SUPFAM" id="SSF57196">
    <property type="entry name" value="EGF/Laminin"/>
    <property type="match status" value="1"/>
</dbReference>
<dbReference type="PROSITE" id="PS00615">
    <property type="entry name" value="C_TYPE_LECTIN_1"/>
    <property type="match status" value="1"/>
</dbReference>
<dbReference type="PROSITE" id="PS50041">
    <property type="entry name" value="C_TYPE_LECTIN_2"/>
    <property type="match status" value="1"/>
</dbReference>
<dbReference type="PROSITE" id="PS00022">
    <property type="entry name" value="EGF_1"/>
    <property type="match status" value="1"/>
</dbReference>
<dbReference type="PROSITE" id="PS01186">
    <property type="entry name" value="EGF_2"/>
    <property type="match status" value="1"/>
</dbReference>
<dbReference type="PROSITE" id="PS50026">
    <property type="entry name" value="EGF_3"/>
    <property type="match status" value="1"/>
</dbReference>
<dbReference type="PROSITE" id="PS50923">
    <property type="entry name" value="SUSHI"/>
    <property type="match status" value="8"/>
</dbReference>
<sequence>MASCPKAIWSWRFQRVVFRSVQLLCFSILIFELMTQKEVSAWTYHYSDKPYSWNYSRAFCQKYYTDLVAIQNKNEIAYLNETIPYYNSYYWIGIRKIDNKWTWVGTKKTLTEEAENWADNEPNNKKNNQDCVEIYIKSPSAPGKWNDEPCGKRKRALCYRASCQDMSCSKQGECIETIGNYTCSCYPGFYGPECEYVRECGEFDLPQNVHMNCSHPLGNFSFKSQCSFHCAEGYALNGPRELECLASGIWTNSPPQCVAVQCPALKSPEQGSMSCFHSAKAFQHQSSCSFSCEEGFTLVGPEVVHCTALGVWTAPTPVCKAIACESLESPVHGSMDCSPSPRAFQYNTSCSFRCAEGFTLRGADTVRCADSGEWTAPAPVCQALQCQDLPTSNKARVNCSHPFGDFRYQSTCSFTCDEGSFLVGASVLQCLDTGNWDAPFPECQAVTCAPLPNPQNGEKTCVQPLGGSSYKSTCWFTCHEGFSLSGPERLDCTPSGHWTGSPPTCEASKCPELSAPEQGSLDCPDTHGEFIVGSICHFSCNEGLKLEGSNHVECTASGRWTAPPPSCKVDTVSAPAPGLRCPSLIAPNQGTMSCQHHLRNFGLNTTCHFGCKAGFTLMGESALQCRPSRQWTAVAPTCRAVKCSKLPVTEPIVMNCSNPWGNFSYGSTCSFHCPEGQLLNGSERTACQENGQWSTTMPTCQAGPLTIQEALTYIGGAAAGTTGLVTSSILLALLRRRRRQKDDGKSPLNPQSHLGTYGVFTNAAFDPSP</sequence>
<comment type="function">
    <text evidence="2">Ca(2+)-dependent receptor for myeloid cells that binds to carbohydrates on neutrophils and monocytes. Mediates the interaction of activated endothelial cells or platelets with leukocytes. The ligand recognized is sialyl-Lewis X. Mediates rapid rolling of leukocyte rolling over vascular surfaces during the initial steps in inflammation through interaction with SELPLG. Mediates cell-cell interactions and cell adhesion via the interaction with integrin alpha-IIb/beta3 (ITGA2B:ITGB3) and integrin alpha-V/beta-3 (ITGAV:ITGB3) (By similarity).</text>
</comment>
<comment type="subunit">
    <text evidence="2">Interacts with SNX17. Interacts with SELPLG/PSGL1 and PODXL2 and mediates neutrophil adhesion and leukocyte rolling. This interaction requires the sialyl-Lewis X epitope of SELPLG and PODXL2, and specific tyrosine sulfation on SELPLG. Interacts (via C-type lectin domain) with alpha-IIb/beta3 integrin ITGA2B:ITGB3 and alpha-V/beta-3 integrin ITGAV:ITGB3 (By similarity). Interacts with alpha5/beta1 integrin ITGA5:ITGB1 and alpha4/beta1 integrin ITGA4:ITGB (By similarity).</text>
</comment>
<comment type="subcellular location">
    <subcellularLocation>
        <location evidence="2">Cell membrane</location>
        <topology evidence="2">Single-pass type I membrane protein</topology>
    </subcellularLocation>
</comment>
<comment type="domain">
    <text evidence="2">The C-type lectin domain is required for binding to integrins (By similarity). Binding to soluble integrins alpha-V/beta-3 (ITGAV:ITGB3) and alpha-IIb/beta3 (ITGA2B:ITGB) is cation-dependent (By similarity). Binds to the allosteric site (site 2) of integrins and activates them (By similarity). The interaction with integrins may mediate cell-cell interactions and cell adhesion (By similarity).</text>
</comment>
<comment type="similarity">
    <text evidence="8">Belongs to the selectin/LECAM family.</text>
</comment>
<feature type="signal peptide" evidence="3">
    <location>
        <begin position="1"/>
        <end position="32"/>
    </location>
</feature>
<feature type="chain" id="PRO_0000017501" description="P-selectin">
    <location>
        <begin position="33"/>
        <end position="769"/>
    </location>
</feature>
<feature type="topological domain" description="Extracellular" evidence="3">
    <location>
        <begin position="33"/>
        <end position="717"/>
    </location>
</feature>
<feature type="transmembrane region" description="Helical" evidence="3">
    <location>
        <begin position="718"/>
        <end position="734"/>
    </location>
</feature>
<feature type="topological domain" description="Cytoplasmic" evidence="3">
    <location>
        <begin position="735"/>
        <end position="769"/>
    </location>
</feature>
<feature type="domain" description="C-type lectin" evidence="4">
    <location>
        <begin position="58"/>
        <end position="158"/>
    </location>
</feature>
<feature type="domain" description="EGF-like" evidence="5">
    <location>
        <begin position="159"/>
        <end position="195"/>
    </location>
</feature>
<feature type="domain" description="Sushi 1" evidence="6">
    <location>
        <begin position="198"/>
        <end position="259"/>
    </location>
</feature>
<feature type="domain" description="Sushi 2" evidence="6">
    <location>
        <begin position="260"/>
        <end position="321"/>
    </location>
</feature>
<feature type="domain" description="Sushi 3" evidence="6">
    <location>
        <begin position="322"/>
        <end position="383"/>
    </location>
</feature>
<feature type="domain" description="Sushi 4" evidence="6">
    <location>
        <begin position="384"/>
        <end position="445"/>
    </location>
</feature>
<feature type="domain" description="Sushi 5" evidence="6">
    <location>
        <begin position="446"/>
        <end position="507"/>
    </location>
</feature>
<feature type="domain" description="Sushi 6" evidence="6">
    <location>
        <begin position="508"/>
        <end position="569"/>
    </location>
</feature>
<feature type="domain" description="Sushi 7" evidence="6">
    <location>
        <begin position="579"/>
        <end position="640"/>
    </location>
</feature>
<feature type="domain" description="Sushi 8" evidence="6">
    <location>
        <begin position="641"/>
        <end position="702"/>
    </location>
</feature>
<feature type="region of interest" description="Disordered" evidence="7">
    <location>
        <begin position="740"/>
        <end position="769"/>
    </location>
</feature>
<feature type="region of interest" description="Interaction with SNX17" evidence="1">
    <location>
        <begin position="760"/>
        <end position="769"/>
    </location>
</feature>
<feature type="short sequence motif" description="Endocytosis signal" evidence="8">
    <location>
        <begin position="757"/>
        <end position="760"/>
    </location>
</feature>
<feature type="binding site" evidence="2">
    <location>
        <position position="121"/>
    </location>
    <ligand>
        <name>Ca(2+)</name>
        <dbReference type="ChEBI" id="CHEBI:29108"/>
    </ligand>
</feature>
<feature type="binding site" evidence="2">
    <location>
        <position position="123"/>
    </location>
    <ligand>
        <name>a carbohydrate</name>
        <dbReference type="ChEBI" id="CHEBI:16646"/>
    </ligand>
</feature>
<feature type="binding site" evidence="2">
    <location>
        <position position="123"/>
    </location>
    <ligand>
        <name>Ca(2+)</name>
        <dbReference type="ChEBI" id="CHEBI:29108"/>
    </ligand>
</feature>
<feature type="binding site" evidence="2">
    <location>
        <position position="124"/>
    </location>
    <ligand>
        <name>Ca(2+)</name>
        <dbReference type="ChEBI" id="CHEBI:29108"/>
    </ligand>
</feature>
<feature type="binding site" evidence="2">
    <location>
        <position position="133"/>
    </location>
    <ligand>
        <name>a carbohydrate</name>
        <dbReference type="ChEBI" id="CHEBI:16646"/>
    </ligand>
</feature>
<feature type="binding site" evidence="2">
    <location>
        <position position="146"/>
    </location>
    <ligand>
        <name>a carbohydrate</name>
        <dbReference type="ChEBI" id="CHEBI:16646"/>
    </ligand>
</feature>
<feature type="binding site" evidence="2">
    <location>
        <position position="146"/>
    </location>
    <ligand>
        <name>Ca(2+)</name>
        <dbReference type="ChEBI" id="CHEBI:29108"/>
    </ligand>
</feature>
<feature type="binding site" evidence="2">
    <location>
        <position position="147"/>
    </location>
    <ligand>
        <name>Ca(2+)</name>
        <dbReference type="ChEBI" id="CHEBI:29108"/>
    </ligand>
</feature>
<feature type="glycosylation site" description="N-linked (GlcNAc...) asparagine" evidence="3">
    <location>
        <position position="54"/>
    </location>
</feature>
<feature type="glycosylation site" description="N-linked (GlcNAc...) asparagine" evidence="3">
    <location>
        <position position="80"/>
    </location>
</feature>
<feature type="glycosylation site" description="N-linked (GlcNAc...) asparagine" evidence="3">
    <location>
        <position position="180"/>
    </location>
</feature>
<feature type="glycosylation site" description="N-linked (GlcNAc...) asparagine" evidence="3">
    <location>
        <position position="212"/>
    </location>
</feature>
<feature type="glycosylation site" description="N-linked (GlcNAc...) asparagine" evidence="3">
    <location>
        <position position="219"/>
    </location>
</feature>
<feature type="glycosylation site" description="N-linked (GlcNAc...) asparagine" evidence="3">
    <location>
        <position position="347"/>
    </location>
</feature>
<feature type="glycosylation site" description="N-linked (GlcNAc...) asparagine" evidence="3">
    <location>
        <position position="398"/>
    </location>
</feature>
<feature type="glycosylation site" description="N-linked (GlcNAc...) asparagine" evidence="3">
    <location>
        <position position="604"/>
    </location>
</feature>
<feature type="glycosylation site" description="N-linked (GlcNAc...) asparagine" evidence="3">
    <location>
        <position position="655"/>
    </location>
</feature>
<feature type="glycosylation site" description="N-linked (GlcNAc...) asparagine" evidence="3">
    <location>
        <position position="662"/>
    </location>
</feature>
<feature type="glycosylation site" description="N-linked (GlcNAc...) asparagine" evidence="3">
    <location>
        <position position="680"/>
    </location>
</feature>
<feature type="disulfide bond" evidence="2">
    <location>
        <begin position="60"/>
        <end position="158"/>
    </location>
</feature>
<feature type="disulfide bond" evidence="2">
    <location>
        <begin position="131"/>
        <end position="150"/>
    </location>
</feature>
<feature type="disulfide bond" evidence="2">
    <location>
        <begin position="163"/>
        <end position="174"/>
    </location>
</feature>
<feature type="disulfide bond" evidence="2">
    <location>
        <begin position="168"/>
        <end position="183"/>
    </location>
</feature>
<feature type="disulfide bond" evidence="2">
    <location>
        <begin position="185"/>
        <end position="194"/>
    </location>
</feature>
<feature type="disulfide bond" evidence="1">
    <location>
        <begin position="200"/>
        <end position="244"/>
    </location>
</feature>
<feature type="disulfide bond" evidence="1">
    <location>
        <begin position="230"/>
        <end position="257"/>
    </location>
</feature>
<feature type="disulfide bond" evidence="1">
    <location>
        <begin position="262"/>
        <end position="306"/>
    </location>
</feature>
<feature type="disulfide bond" evidence="1">
    <location>
        <begin position="292"/>
        <end position="319"/>
    </location>
</feature>
<feature type="disulfide bond" evidence="1">
    <location>
        <begin position="324"/>
        <end position="368"/>
    </location>
</feature>
<feature type="disulfide bond" evidence="1">
    <location>
        <begin position="354"/>
        <end position="381"/>
    </location>
</feature>
<feature type="disulfide bond" evidence="1">
    <location>
        <begin position="386"/>
        <end position="430"/>
    </location>
</feature>
<feature type="disulfide bond" evidence="1">
    <location>
        <begin position="416"/>
        <end position="443"/>
    </location>
</feature>
<feature type="disulfide bond" evidence="1">
    <location>
        <begin position="448"/>
        <end position="492"/>
    </location>
</feature>
<feature type="disulfide bond" evidence="1">
    <location>
        <begin position="478"/>
        <end position="505"/>
    </location>
</feature>
<feature type="disulfide bond" evidence="1">
    <location>
        <begin position="510"/>
        <end position="554"/>
    </location>
</feature>
<feature type="disulfide bond" evidence="1">
    <location>
        <begin position="540"/>
        <end position="567"/>
    </location>
</feature>
<feature type="disulfide bond" evidence="1">
    <location>
        <begin position="581"/>
        <end position="625"/>
    </location>
</feature>
<feature type="disulfide bond" evidence="1">
    <location>
        <begin position="611"/>
        <end position="638"/>
    </location>
</feature>
<feature type="disulfide bond" evidence="1">
    <location>
        <begin position="643"/>
        <end position="687"/>
    </location>
</feature>
<feature type="disulfide bond" evidence="1">
    <location>
        <begin position="673"/>
        <end position="700"/>
    </location>
</feature>
<feature type="sequence variant">
    <original>S</original>
    <variation>T</variation>
    <location>
        <position position="566"/>
    </location>
</feature>
<feature type="sequence variant">
    <original>L</original>
    <variation>V</variation>
    <location>
        <position position="579"/>
    </location>
</feature>
<proteinExistence type="evidence at transcript level"/>
<name>LYAM3_SHEEP</name>